<reference key="1">
    <citation type="submission" date="2005-05" db="EMBL/GenBank/DDBJ databases">
        <title>Cross-reactivity of a recombinant non-specific lipid transfer protein from strawberry.</title>
        <authorList>
            <person name="Zuidmeer L."/>
            <person name="Salentijn E."/>
            <person name="Fernandez-Rivas M."/>
            <person name="Gonzalez Mancebo E."/>
            <person name="Bolhaar S.T.H.P."/>
            <person name="Knulst A.C."/>
            <person name="Hoffmann-Sommergruber K."/>
            <person name="Asero R."/>
            <person name="Matos C.I."/>
            <person name="Pelgrom K.T.B."/>
            <person name="Gilissen L.J.W.J."/>
            <person name="van Ree R."/>
        </authorList>
    </citation>
    <scope>NUCLEOTIDE SEQUENCE [MRNA]</scope>
    <source>
        <tissue>Fruit</tissue>
    </source>
</reference>
<organism>
    <name type="scientific">Fragaria ananassa</name>
    <name type="common">Strawberry</name>
    <name type="synonym">Fragaria chiloensis x Fragaria virginiana</name>
    <dbReference type="NCBI Taxonomy" id="3747"/>
    <lineage>
        <taxon>Eukaryota</taxon>
        <taxon>Viridiplantae</taxon>
        <taxon>Streptophyta</taxon>
        <taxon>Embryophyta</taxon>
        <taxon>Tracheophyta</taxon>
        <taxon>Spermatophyta</taxon>
        <taxon>Magnoliopsida</taxon>
        <taxon>eudicotyledons</taxon>
        <taxon>Gunneridae</taxon>
        <taxon>Pentapetalae</taxon>
        <taxon>rosids</taxon>
        <taxon>fabids</taxon>
        <taxon>Rosales</taxon>
        <taxon>Rosaceae</taxon>
        <taxon>Rosoideae</taxon>
        <taxon>Potentilleae</taxon>
        <taxon>Fragariinae</taxon>
        <taxon>Fragaria</taxon>
    </lineage>
</organism>
<dbReference type="EMBL" id="DR027057">
    <property type="status" value="NOT_ANNOTATED_CDS"/>
    <property type="molecule type" value="mRNA"/>
</dbReference>
<dbReference type="SMR" id="P0C0Y3"/>
<dbReference type="Allergome" id="1172">
    <property type="allergen name" value="Fra a 4"/>
</dbReference>
<dbReference type="Allergome" id="3287">
    <property type="allergen name" value="Fra a 4.0101"/>
</dbReference>
<dbReference type="GO" id="GO:0005938">
    <property type="term" value="C:cell cortex"/>
    <property type="evidence" value="ECO:0007669"/>
    <property type="project" value="TreeGrafter"/>
</dbReference>
<dbReference type="GO" id="GO:0005856">
    <property type="term" value="C:cytoskeleton"/>
    <property type="evidence" value="ECO:0007669"/>
    <property type="project" value="UniProtKB-SubCell"/>
</dbReference>
<dbReference type="GO" id="GO:0003785">
    <property type="term" value="F:actin monomer binding"/>
    <property type="evidence" value="ECO:0007669"/>
    <property type="project" value="TreeGrafter"/>
</dbReference>
<dbReference type="CDD" id="cd00148">
    <property type="entry name" value="PROF"/>
    <property type="match status" value="1"/>
</dbReference>
<dbReference type="FunFam" id="3.30.450.30:FF:000001">
    <property type="entry name" value="Profilin"/>
    <property type="match status" value="1"/>
</dbReference>
<dbReference type="Gene3D" id="3.30.450.30">
    <property type="entry name" value="Dynein light chain 2a, cytoplasmic"/>
    <property type="match status" value="1"/>
</dbReference>
<dbReference type="InterPro" id="IPR048278">
    <property type="entry name" value="PFN"/>
</dbReference>
<dbReference type="InterPro" id="IPR005455">
    <property type="entry name" value="PFN_euk"/>
</dbReference>
<dbReference type="InterPro" id="IPR036140">
    <property type="entry name" value="PFN_sf"/>
</dbReference>
<dbReference type="InterPro" id="IPR027310">
    <property type="entry name" value="Profilin_CS"/>
</dbReference>
<dbReference type="PANTHER" id="PTHR11604">
    <property type="entry name" value="PROFILIN"/>
    <property type="match status" value="1"/>
</dbReference>
<dbReference type="PANTHER" id="PTHR11604:SF49">
    <property type="entry name" value="PROFILIN-2"/>
    <property type="match status" value="1"/>
</dbReference>
<dbReference type="Pfam" id="PF00235">
    <property type="entry name" value="Profilin"/>
    <property type="match status" value="1"/>
</dbReference>
<dbReference type="PRINTS" id="PR00392">
    <property type="entry name" value="PROFILIN"/>
</dbReference>
<dbReference type="PRINTS" id="PR01640">
    <property type="entry name" value="PROFILINPLNT"/>
</dbReference>
<dbReference type="SMART" id="SM00392">
    <property type="entry name" value="PROF"/>
    <property type="match status" value="1"/>
</dbReference>
<dbReference type="SUPFAM" id="SSF55770">
    <property type="entry name" value="Profilin (actin-binding protein)"/>
    <property type="match status" value="1"/>
</dbReference>
<dbReference type="PROSITE" id="PS00414">
    <property type="entry name" value="PROFILIN"/>
    <property type="match status" value="1"/>
</dbReference>
<feature type="initiator methionine" description="Removed" evidence="1">
    <location>
        <position position="1"/>
    </location>
</feature>
<feature type="chain" id="PRO_0000199631" description="Profilin">
    <location>
        <begin position="2"/>
        <end position="131"/>
    </location>
</feature>
<name>PROF_FRAAN</name>
<keyword id="KW-0009">Actin-binding</keyword>
<keyword id="KW-0020">Allergen</keyword>
<keyword id="KW-0963">Cytoplasm</keyword>
<keyword id="KW-0206">Cytoskeleton</keyword>
<comment type="function">
    <text evidence="1">Binds to actin and affects the structure of the cytoskeleton. At high concentrations, profilin prevents the polymerization of actin, whereas it enhances it at low concentrations. By binding to PIP2, it inhibits the formation of IP3 and DG (By similarity).</text>
</comment>
<comment type="subunit">
    <text>Occurs in many kinds of cells as a complex with monomeric actin in a 1:1 ratio.</text>
</comment>
<comment type="subcellular location">
    <subcellularLocation>
        <location evidence="1">Cytoplasm</location>
        <location evidence="1">Cytoskeleton</location>
    </subcellularLocation>
</comment>
<comment type="allergen">
    <text>Causes an allergic reaction in human.</text>
</comment>
<comment type="similarity">
    <text evidence="2">Belongs to the profilin family.</text>
</comment>
<evidence type="ECO:0000250" key="1"/>
<evidence type="ECO:0000305" key="2"/>
<accession>P0C0Y3</accession>
<sequence length="131" mass="14067">MSWQTYVDDHLMCEIEGNHLSAAAIIGQDGSVWAQSATFPQLKPEEVTGIVRDFDEPGTLAPTGLYLGGTKYMVIQGEPGAVIRGKKGPGGVTVKKTTLALLIGIYDEPMTPGQCNMIVERLGDYLVEQGL</sequence>
<protein>
    <recommendedName>
        <fullName>Profilin</fullName>
    </recommendedName>
    <allergenName>Fra a 4</allergenName>
</protein>
<proteinExistence type="evidence at protein level"/>